<gene>
    <name evidence="1" type="primary">pafA</name>
    <name type="ordered locus">Strop_2247</name>
</gene>
<protein>
    <recommendedName>
        <fullName evidence="1">Pup--protein ligase</fullName>
        <ecNumber evidence="1">6.3.1.19</ecNumber>
    </recommendedName>
    <alternativeName>
        <fullName evidence="1">Proteasome accessory factor A</fullName>
    </alternativeName>
    <alternativeName>
        <fullName evidence="1">Pup-conjugating enzyme</fullName>
    </alternativeName>
</protein>
<name>PAFA_SALTO</name>
<keyword id="KW-0067">ATP-binding</keyword>
<keyword id="KW-0436">Ligase</keyword>
<keyword id="KW-0460">Magnesium</keyword>
<keyword id="KW-0479">Metal-binding</keyword>
<keyword id="KW-0547">Nucleotide-binding</keyword>
<keyword id="KW-1185">Reference proteome</keyword>
<keyword id="KW-0833">Ubl conjugation pathway</keyword>
<accession>A4X747</accession>
<feature type="chain" id="PRO_0000395953" description="Pup--protein ligase">
    <location>
        <begin position="1"/>
        <end position="452"/>
    </location>
</feature>
<feature type="active site" description="Proton acceptor" evidence="1">
    <location>
        <position position="57"/>
    </location>
</feature>
<feature type="binding site" evidence="1">
    <location>
        <position position="9"/>
    </location>
    <ligand>
        <name>Mg(2+)</name>
        <dbReference type="ChEBI" id="CHEBI:18420"/>
    </ligand>
</feature>
<feature type="binding site" evidence="1">
    <location>
        <position position="53"/>
    </location>
    <ligand>
        <name>ATP</name>
        <dbReference type="ChEBI" id="CHEBI:30616"/>
    </ligand>
</feature>
<feature type="binding site" evidence="1">
    <location>
        <position position="55"/>
    </location>
    <ligand>
        <name>Mg(2+)</name>
        <dbReference type="ChEBI" id="CHEBI:18420"/>
    </ligand>
</feature>
<feature type="binding site" evidence="1">
    <location>
        <position position="63"/>
    </location>
    <ligand>
        <name>Mg(2+)</name>
        <dbReference type="ChEBI" id="CHEBI:18420"/>
    </ligand>
</feature>
<feature type="binding site" evidence="1">
    <location>
        <position position="66"/>
    </location>
    <ligand>
        <name>ATP</name>
        <dbReference type="ChEBI" id="CHEBI:30616"/>
    </ligand>
</feature>
<feature type="binding site" evidence="1">
    <location>
        <position position="419"/>
    </location>
    <ligand>
        <name>ATP</name>
        <dbReference type="ChEBI" id="CHEBI:30616"/>
    </ligand>
</feature>
<proteinExistence type="inferred from homology"/>
<sequence>MERRIFGLETEYGVTCTYRGQRRLSPDEVARYLFRRVVSWGRSSNVFLRNGARLYLDVGSHPEYATPECDSVADLVAHDRAGERILEGLLVDAEKRLHDEGIAGEIYLFKNNTDSAGNSYGCHENYLVSRHGEFGRLADVLIPFLVTRQLICGAGKVLQTPRGAVYCLSQRAEHIWEGVSSATTRSRPIINTRDEPHADAERYRRLHVIVGDSNMNEVTTLLKVGAADIVLRMIESGVVMRDLTLENPIRAIREVSHDITGRRKVRLASGKEISALEIQQEYLAKATEFVERRGGDQTAKRVVELWGRVLSAVETGDLEPVAREIDWVTKLRLIERYQRKHDLPLSHPRVAQMDLAYHDLRRGRGLYGLLERRGQVDRAATDPEIFEAKETPPQTTRARLRGEFIRHAQEKRRDFTVDWVHLKLNDQAQRTVLCKDPFRAYDERVERLIASM</sequence>
<evidence type="ECO:0000255" key="1">
    <source>
        <dbReference type="HAMAP-Rule" id="MF_02111"/>
    </source>
</evidence>
<dbReference type="EC" id="6.3.1.19" evidence="1"/>
<dbReference type="EMBL" id="CP000667">
    <property type="protein sequence ID" value="ABP54697.1"/>
    <property type="molecule type" value="Genomic_DNA"/>
</dbReference>
<dbReference type="RefSeq" id="WP_012013478.1">
    <property type="nucleotide sequence ID" value="NC_009380.1"/>
</dbReference>
<dbReference type="SMR" id="A4X747"/>
<dbReference type="STRING" id="369723.Strop_2247"/>
<dbReference type="MEROPS" id="U72.001"/>
<dbReference type="KEGG" id="stp:Strop_2247"/>
<dbReference type="PATRIC" id="fig|369723.5.peg.2305"/>
<dbReference type="eggNOG" id="COG0638">
    <property type="taxonomic scope" value="Bacteria"/>
</dbReference>
<dbReference type="HOGENOM" id="CLU_040524_0_1_11"/>
<dbReference type="BRENDA" id="6.3.1.19">
    <property type="organism ID" value="12347"/>
</dbReference>
<dbReference type="UniPathway" id="UPA00997"/>
<dbReference type="UniPathway" id="UPA00998"/>
<dbReference type="Proteomes" id="UP000000235">
    <property type="component" value="Chromosome"/>
</dbReference>
<dbReference type="GO" id="GO:0005524">
    <property type="term" value="F:ATP binding"/>
    <property type="evidence" value="ECO:0007669"/>
    <property type="project" value="UniProtKB-UniRule"/>
</dbReference>
<dbReference type="GO" id="GO:0016879">
    <property type="term" value="F:ligase activity, forming carbon-nitrogen bonds"/>
    <property type="evidence" value="ECO:0007669"/>
    <property type="project" value="InterPro"/>
</dbReference>
<dbReference type="GO" id="GO:0000287">
    <property type="term" value="F:magnesium ion binding"/>
    <property type="evidence" value="ECO:0007669"/>
    <property type="project" value="UniProtKB-UniRule"/>
</dbReference>
<dbReference type="GO" id="GO:0019787">
    <property type="term" value="F:ubiquitin-like protein transferase activity"/>
    <property type="evidence" value="ECO:0007669"/>
    <property type="project" value="UniProtKB-UniRule"/>
</dbReference>
<dbReference type="GO" id="GO:0019941">
    <property type="term" value="P:modification-dependent protein catabolic process"/>
    <property type="evidence" value="ECO:0007669"/>
    <property type="project" value="UniProtKB-UniRule"/>
</dbReference>
<dbReference type="GO" id="GO:0010498">
    <property type="term" value="P:proteasomal protein catabolic process"/>
    <property type="evidence" value="ECO:0007669"/>
    <property type="project" value="UniProtKB-UniRule"/>
</dbReference>
<dbReference type="GO" id="GO:0070490">
    <property type="term" value="P:protein pupylation"/>
    <property type="evidence" value="ECO:0007669"/>
    <property type="project" value="UniProtKB-UniRule"/>
</dbReference>
<dbReference type="HAMAP" id="MF_02111">
    <property type="entry name" value="Pup_ligase"/>
    <property type="match status" value="1"/>
</dbReference>
<dbReference type="InterPro" id="IPR022279">
    <property type="entry name" value="Pup_ligase"/>
</dbReference>
<dbReference type="InterPro" id="IPR004347">
    <property type="entry name" value="Pup_ligase/deamidase"/>
</dbReference>
<dbReference type="NCBIfam" id="TIGR03686">
    <property type="entry name" value="pupylate_PafA"/>
    <property type="match status" value="1"/>
</dbReference>
<dbReference type="PANTHER" id="PTHR42307">
    <property type="entry name" value="PUP DEAMIDASE/DEPUPYLASE"/>
    <property type="match status" value="1"/>
</dbReference>
<dbReference type="PANTHER" id="PTHR42307:SF3">
    <property type="entry name" value="PUP--PROTEIN LIGASE"/>
    <property type="match status" value="1"/>
</dbReference>
<dbReference type="Pfam" id="PF03136">
    <property type="entry name" value="Pup_ligase"/>
    <property type="match status" value="1"/>
</dbReference>
<dbReference type="PIRSF" id="PIRSF018077">
    <property type="entry name" value="UCP018077"/>
    <property type="match status" value="1"/>
</dbReference>
<comment type="function">
    <text evidence="1">Catalyzes the covalent attachment of the prokaryotic ubiquitin-like protein modifier Pup to the proteasomal substrate proteins, thereby targeting them for proteasomal degradation. This tagging system is termed pupylation. The ligation reaction involves the side-chain carboxylate of the C-terminal glutamate of Pup and the side-chain amino group of a substrate lysine.</text>
</comment>
<comment type="catalytic activity">
    <reaction evidence="1">
        <text>ATP + [prokaryotic ubiquitin-like protein]-L-glutamate + [protein]-L-lysine = ADP + phosphate + N(6)-([prokaryotic ubiquitin-like protein]-gamma-L-glutamyl)-[protein]-L-lysine.</text>
        <dbReference type="EC" id="6.3.1.19"/>
    </reaction>
</comment>
<comment type="pathway">
    <text evidence="1">Protein degradation; proteasomal Pup-dependent pathway.</text>
</comment>
<comment type="pathway">
    <text evidence="1">Protein modification; protein pupylation.</text>
</comment>
<comment type="miscellaneous">
    <text evidence="1">The reaction mechanism probably proceeds via the activation of Pup by phosphorylation of its C-terminal glutamate, which is then subject to nucleophilic attack by the substrate lysine, resulting in an isopeptide bond and the release of phosphate as a good leaving group.</text>
</comment>
<comment type="similarity">
    <text evidence="1">Belongs to the Pup ligase/Pup deamidase family. Pup-conjugating enzyme subfamily.</text>
</comment>
<organism>
    <name type="scientific">Salinispora tropica (strain ATCC BAA-916 / DSM 44818 / JCM 13857 / NBRC 105044 / CNB-440)</name>
    <dbReference type="NCBI Taxonomy" id="369723"/>
    <lineage>
        <taxon>Bacteria</taxon>
        <taxon>Bacillati</taxon>
        <taxon>Actinomycetota</taxon>
        <taxon>Actinomycetes</taxon>
        <taxon>Micromonosporales</taxon>
        <taxon>Micromonosporaceae</taxon>
        <taxon>Salinispora</taxon>
    </lineage>
</organism>
<reference key="1">
    <citation type="journal article" date="2007" name="Proc. Natl. Acad. Sci. U.S.A.">
        <title>Genome sequencing reveals complex secondary metabolome in the marine actinomycete Salinispora tropica.</title>
        <authorList>
            <person name="Udwary D.W."/>
            <person name="Zeigler L."/>
            <person name="Asolkar R.N."/>
            <person name="Singan V."/>
            <person name="Lapidus A."/>
            <person name="Fenical W."/>
            <person name="Jensen P.R."/>
            <person name="Moore B.S."/>
        </authorList>
    </citation>
    <scope>NUCLEOTIDE SEQUENCE [LARGE SCALE GENOMIC DNA]</scope>
    <source>
        <strain>ATCC BAA-916 / DSM 44818 / JCM 13857 / NBRC 105044 / CNB-440</strain>
    </source>
</reference>